<gene>
    <name type="primary">FKBP10</name>
</gene>
<organism>
    <name type="scientific">Bos taurus</name>
    <name type="common">Bovine</name>
    <dbReference type="NCBI Taxonomy" id="9913"/>
    <lineage>
        <taxon>Eukaryota</taxon>
        <taxon>Metazoa</taxon>
        <taxon>Chordata</taxon>
        <taxon>Craniata</taxon>
        <taxon>Vertebrata</taxon>
        <taxon>Euteleostomi</taxon>
        <taxon>Mammalia</taxon>
        <taxon>Eutheria</taxon>
        <taxon>Laurasiatheria</taxon>
        <taxon>Artiodactyla</taxon>
        <taxon>Ruminantia</taxon>
        <taxon>Pecora</taxon>
        <taxon>Bovidae</taxon>
        <taxon>Bovinae</taxon>
        <taxon>Bos</taxon>
    </lineage>
</organism>
<sequence>MLRAGPPSHTLLRLPLLQLLLLLLVQAVGRGLGRASPAGGPLEDVVIERYHIPRVCPREVQMGDFVRYHYNGTFEDGKKFDSSYDRHTLVAIVVGVGRLITGMDRGLMGMCVNERRRLIVPPHLGYGSIGVAGLIPPDATLYFDVVLLDVWNKEDTVQVSTLLRPPHCPRMVQDSDFVRYHYNGTLLDGTAFDTSYSKGGTYDTYVGSGWLIKGMDQGLLGMCPGERRKIVIPPFLAYGEKGYGTVIPSQASLVFHVLLIDVHNPKDTVQLETLELPPGCVRRAVAGDFMRYHYNGSLMDGTLFDSSYSRNHTYNTYVGQGYIIPGMDQGLQGSCMGERRRITIPPHLAYGENGTGDKIPGSAVLIFDVHVIDFHNPADPVEIKTLSRPLETCNETAKLGDFVHYHYNCSLLDGTRLFSSHDYGAPQEATLGAHKVIEGLDTGLQGMCVGERRQLVVPPHLAHGESGARGVPGSAVLLFEVELVSREDGLPTGYLFVWHEDPPAHLFEHMDLNKDGEVPVEEFSTFIKAQVSEGKGRLLPGQDPEKTIGDMFQNQDRNQDGKITAEELKLKSDEDQDRVHEEL</sequence>
<proteinExistence type="evidence at transcript level"/>
<dbReference type="EC" id="5.2.1.8"/>
<dbReference type="EMBL" id="BC113250">
    <property type="protein sequence ID" value="AAI13251.1"/>
    <property type="molecule type" value="mRNA"/>
</dbReference>
<dbReference type="RefSeq" id="NP_001039868.1">
    <property type="nucleotide sequence ID" value="NM_001046403.1"/>
</dbReference>
<dbReference type="SMR" id="Q2HJ89"/>
<dbReference type="FunCoup" id="Q2HJ89">
    <property type="interactions" value="648"/>
</dbReference>
<dbReference type="IntAct" id="Q2HJ89">
    <property type="interactions" value="1"/>
</dbReference>
<dbReference type="STRING" id="9913.ENSBTAP00000015220"/>
<dbReference type="GlyCosmos" id="Q2HJ89">
    <property type="glycosylation" value="3 sites, No reported glycans"/>
</dbReference>
<dbReference type="GlyGen" id="Q2HJ89">
    <property type="glycosylation" value="3 sites"/>
</dbReference>
<dbReference type="PaxDb" id="9913-ENSBTAP00000015220"/>
<dbReference type="Ensembl" id="ENSBTAT00000015220.6">
    <property type="protein sequence ID" value="ENSBTAP00000015220.5"/>
    <property type="gene ID" value="ENSBTAG00000011454.6"/>
</dbReference>
<dbReference type="GeneID" id="535310"/>
<dbReference type="KEGG" id="bta:535310"/>
<dbReference type="CTD" id="60681"/>
<dbReference type="VEuPathDB" id="HostDB:ENSBTAG00000011454"/>
<dbReference type="VGNC" id="VGNC:29017">
    <property type="gene designation" value="FKBP10"/>
</dbReference>
<dbReference type="eggNOG" id="KOG0549">
    <property type="taxonomic scope" value="Eukaryota"/>
</dbReference>
<dbReference type="GeneTree" id="ENSGT00940000156331"/>
<dbReference type="InParanoid" id="Q2HJ89"/>
<dbReference type="OMA" id="YDRHTLV"/>
<dbReference type="OrthoDB" id="1902587at2759"/>
<dbReference type="Proteomes" id="UP000009136">
    <property type="component" value="Chromosome 19"/>
</dbReference>
<dbReference type="Bgee" id="ENSBTAG00000011454">
    <property type="expression patterns" value="Expressed in theca cell and 99 other cell types or tissues"/>
</dbReference>
<dbReference type="GO" id="GO:0005783">
    <property type="term" value="C:endoplasmic reticulum"/>
    <property type="evidence" value="ECO:0000318"/>
    <property type="project" value="GO_Central"/>
</dbReference>
<dbReference type="GO" id="GO:0005788">
    <property type="term" value="C:endoplasmic reticulum lumen"/>
    <property type="evidence" value="ECO:0007669"/>
    <property type="project" value="UniProtKB-SubCell"/>
</dbReference>
<dbReference type="GO" id="GO:0016020">
    <property type="term" value="C:membrane"/>
    <property type="evidence" value="ECO:0007669"/>
    <property type="project" value="Ensembl"/>
</dbReference>
<dbReference type="GO" id="GO:0005758">
    <property type="term" value="C:mitochondrial intermembrane space"/>
    <property type="evidence" value="ECO:0007669"/>
    <property type="project" value="Ensembl"/>
</dbReference>
<dbReference type="GO" id="GO:0005509">
    <property type="term" value="F:calcium ion binding"/>
    <property type="evidence" value="ECO:0007669"/>
    <property type="project" value="InterPro"/>
</dbReference>
<dbReference type="GO" id="GO:0005528">
    <property type="term" value="F:FK506 binding"/>
    <property type="evidence" value="ECO:0007669"/>
    <property type="project" value="Ensembl"/>
</dbReference>
<dbReference type="GO" id="GO:0003755">
    <property type="term" value="F:peptidyl-prolyl cis-trans isomerase activity"/>
    <property type="evidence" value="ECO:0000318"/>
    <property type="project" value="GO_Central"/>
</dbReference>
<dbReference type="GO" id="GO:0035909">
    <property type="term" value="P:aorta morphogenesis"/>
    <property type="evidence" value="ECO:0007669"/>
    <property type="project" value="Ensembl"/>
</dbReference>
<dbReference type="GO" id="GO:0030199">
    <property type="term" value="P:collagen fibril organization"/>
    <property type="evidence" value="ECO:0007669"/>
    <property type="project" value="Ensembl"/>
</dbReference>
<dbReference type="GO" id="GO:0085029">
    <property type="term" value="P:extracellular matrix assembly"/>
    <property type="evidence" value="ECO:0007669"/>
    <property type="project" value="Ensembl"/>
</dbReference>
<dbReference type="GO" id="GO:0001701">
    <property type="term" value="P:in utero embryonic development"/>
    <property type="evidence" value="ECO:0007669"/>
    <property type="project" value="Ensembl"/>
</dbReference>
<dbReference type="GO" id="GO:0006457">
    <property type="term" value="P:protein folding"/>
    <property type="evidence" value="ECO:0000318"/>
    <property type="project" value="GO_Central"/>
</dbReference>
<dbReference type="GO" id="GO:0042060">
    <property type="term" value="P:wound healing"/>
    <property type="evidence" value="ECO:0007669"/>
    <property type="project" value="Ensembl"/>
</dbReference>
<dbReference type="CDD" id="cd00051">
    <property type="entry name" value="EFh"/>
    <property type="match status" value="1"/>
</dbReference>
<dbReference type="FunFam" id="3.10.50.40:FF:000002">
    <property type="entry name" value="Peptidylprolyl isomerase"/>
    <property type="match status" value="4"/>
</dbReference>
<dbReference type="Gene3D" id="3.10.50.40">
    <property type="match status" value="4"/>
</dbReference>
<dbReference type="Gene3D" id="1.10.238.10">
    <property type="entry name" value="EF-hand"/>
    <property type="match status" value="1"/>
</dbReference>
<dbReference type="InterPro" id="IPR011992">
    <property type="entry name" value="EF-hand-dom_pair"/>
</dbReference>
<dbReference type="InterPro" id="IPR018247">
    <property type="entry name" value="EF_Hand_1_Ca_BS"/>
</dbReference>
<dbReference type="InterPro" id="IPR002048">
    <property type="entry name" value="EF_hand_dom"/>
</dbReference>
<dbReference type="InterPro" id="IPR051989">
    <property type="entry name" value="FKBP-like_isomerase"/>
</dbReference>
<dbReference type="InterPro" id="IPR046357">
    <property type="entry name" value="PPIase_dom_sf"/>
</dbReference>
<dbReference type="InterPro" id="IPR001179">
    <property type="entry name" value="PPIase_FKBP_dom"/>
</dbReference>
<dbReference type="PANTHER" id="PTHR46046:SF3">
    <property type="entry name" value="PEPTIDYL-PROLYL CIS-TRANS ISOMERASE FKBP10"/>
    <property type="match status" value="1"/>
</dbReference>
<dbReference type="PANTHER" id="PTHR46046">
    <property type="entry name" value="PEPTIDYLPROLYL ISOMERASE"/>
    <property type="match status" value="1"/>
</dbReference>
<dbReference type="Pfam" id="PF13202">
    <property type="entry name" value="EF-hand_5"/>
    <property type="match status" value="2"/>
</dbReference>
<dbReference type="Pfam" id="PF00254">
    <property type="entry name" value="FKBP_C"/>
    <property type="match status" value="4"/>
</dbReference>
<dbReference type="SMART" id="SM00054">
    <property type="entry name" value="EFh"/>
    <property type="match status" value="2"/>
</dbReference>
<dbReference type="SUPFAM" id="SSF47473">
    <property type="entry name" value="EF-hand"/>
    <property type="match status" value="1"/>
</dbReference>
<dbReference type="SUPFAM" id="SSF54534">
    <property type="entry name" value="FKBP-like"/>
    <property type="match status" value="4"/>
</dbReference>
<dbReference type="PROSITE" id="PS00018">
    <property type="entry name" value="EF_HAND_1"/>
    <property type="match status" value="1"/>
</dbReference>
<dbReference type="PROSITE" id="PS50222">
    <property type="entry name" value="EF_HAND_2"/>
    <property type="match status" value="2"/>
</dbReference>
<dbReference type="PROSITE" id="PS00014">
    <property type="entry name" value="ER_TARGET"/>
    <property type="match status" value="1"/>
</dbReference>
<dbReference type="PROSITE" id="PS50059">
    <property type="entry name" value="FKBP_PPIASE"/>
    <property type="match status" value="4"/>
</dbReference>
<comment type="function">
    <text>PPIases accelerate the folding of proteins during protein synthesis.</text>
</comment>
<comment type="catalytic activity">
    <reaction>
        <text>[protein]-peptidylproline (omega=180) = [protein]-peptidylproline (omega=0)</text>
        <dbReference type="Rhea" id="RHEA:16237"/>
        <dbReference type="Rhea" id="RHEA-COMP:10747"/>
        <dbReference type="Rhea" id="RHEA-COMP:10748"/>
        <dbReference type="ChEBI" id="CHEBI:83833"/>
        <dbReference type="ChEBI" id="CHEBI:83834"/>
        <dbReference type="EC" id="5.2.1.8"/>
    </reaction>
</comment>
<comment type="activity regulation">
    <text evidence="1">Inhibited by both FK506 and rapamycin, but not by cyclosporin A.</text>
</comment>
<comment type="subcellular location">
    <subcellularLocation>
        <location evidence="5">Endoplasmic reticulum lumen</location>
    </subcellularLocation>
</comment>
<comment type="PTM">
    <text evidence="1">Glycosylated and phosphorylated.</text>
</comment>
<evidence type="ECO:0000250" key="1"/>
<evidence type="ECO:0000255" key="2"/>
<evidence type="ECO:0000255" key="3">
    <source>
        <dbReference type="PROSITE-ProRule" id="PRU00277"/>
    </source>
</evidence>
<evidence type="ECO:0000255" key="4">
    <source>
        <dbReference type="PROSITE-ProRule" id="PRU00448"/>
    </source>
</evidence>
<evidence type="ECO:0000255" key="5">
    <source>
        <dbReference type="PROSITE-ProRule" id="PRU10138"/>
    </source>
</evidence>
<evidence type="ECO:0000256" key="6">
    <source>
        <dbReference type="SAM" id="MobiDB-lite"/>
    </source>
</evidence>
<evidence type="ECO:0000305" key="7"/>
<accession>Q2HJ89</accession>
<reference key="1">
    <citation type="submission" date="2006-02" db="EMBL/GenBank/DDBJ databases">
        <authorList>
            <consortium name="NIH - Mammalian Gene Collection (MGC) project"/>
        </authorList>
    </citation>
    <scope>NUCLEOTIDE SEQUENCE [LARGE SCALE MRNA]</scope>
    <source>
        <strain>Hereford</strain>
        <tissue>Uterus</tissue>
    </source>
</reference>
<keyword id="KW-0106">Calcium</keyword>
<keyword id="KW-0256">Endoplasmic reticulum</keyword>
<keyword id="KW-0325">Glycoprotein</keyword>
<keyword id="KW-0413">Isomerase</keyword>
<keyword id="KW-0479">Metal-binding</keyword>
<keyword id="KW-0597">Phosphoprotein</keyword>
<keyword id="KW-1185">Reference proteome</keyword>
<keyword id="KW-0677">Repeat</keyword>
<keyword id="KW-0697">Rotamase</keyword>
<keyword id="KW-0732">Signal</keyword>
<protein>
    <recommendedName>
        <fullName>Peptidyl-prolyl cis-trans isomerase FKBP10</fullName>
        <shortName>PPIase FKBP10</shortName>
        <ecNumber>5.2.1.8</ecNumber>
    </recommendedName>
    <alternativeName>
        <fullName>FK506-binding protein 10</fullName>
        <shortName>FKBP-10</shortName>
    </alternativeName>
    <alternativeName>
        <fullName>Rotamase</fullName>
    </alternativeName>
</protein>
<feature type="signal peptide" evidence="2">
    <location>
        <begin position="1"/>
        <end position="27"/>
    </location>
</feature>
<feature type="chain" id="PRO_0000285594" description="Peptidyl-prolyl cis-trans isomerase FKBP10">
    <location>
        <begin position="28"/>
        <end position="583"/>
    </location>
</feature>
<feature type="domain" description="PPIase FKBP-type 1" evidence="3">
    <location>
        <begin position="63"/>
        <end position="151"/>
    </location>
</feature>
<feature type="domain" description="PPIase FKBP-type 2" evidence="3">
    <location>
        <begin position="175"/>
        <end position="263"/>
    </location>
</feature>
<feature type="domain" description="PPIase FKBP-type 3" evidence="3">
    <location>
        <begin position="287"/>
        <end position="375"/>
    </location>
</feature>
<feature type="domain" description="PPIase FKBP-type 4" evidence="3">
    <location>
        <begin position="400"/>
        <end position="487"/>
    </location>
</feature>
<feature type="domain" description="EF-hand 1" evidence="4">
    <location>
        <begin position="498"/>
        <end position="533"/>
    </location>
</feature>
<feature type="domain" description="EF-hand 2" evidence="4">
    <location>
        <begin position="543"/>
        <end position="578"/>
    </location>
</feature>
<feature type="region of interest" description="Disordered" evidence="6">
    <location>
        <begin position="534"/>
        <end position="583"/>
    </location>
</feature>
<feature type="short sequence motif" description="Prevents secretion from ER" evidence="5">
    <location>
        <begin position="580"/>
        <end position="583"/>
    </location>
</feature>
<feature type="compositionally biased region" description="Basic and acidic residues" evidence="6">
    <location>
        <begin position="557"/>
        <end position="583"/>
    </location>
</feature>
<feature type="binding site" evidence="7">
    <location>
        <position position="511"/>
    </location>
    <ligand>
        <name>Ca(2+)</name>
        <dbReference type="ChEBI" id="CHEBI:29108"/>
        <label>1</label>
    </ligand>
</feature>
<feature type="binding site" evidence="7">
    <location>
        <position position="513"/>
    </location>
    <ligand>
        <name>Ca(2+)</name>
        <dbReference type="ChEBI" id="CHEBI:29108"/>
        <label>1</label>
    </ligand>
</feature>
<feature type="binding site" evidence="7">
    <location>
        <position position="515"/>
    </location>
    <ligand>
        <name>Ca(2+)</name>
        <dbReference type="ChEBI" id="CHEBI:29108"/>
        <label>1</label>
    </ligand>
</feature>
<feature type="binding site" evidence="7">
    <location>
        <position position="517"/>
    </location>
    <ligand>
        <name>Ca(2+)</name>
        <dbReference type="ChEBI" id="CHEBI:29108"/>
        <label>1</label>
    </ligand>
</feature>
<feature type="binding site" evidence="7">
    <location>
        <position position="522"/>
    </location>
    <ligand>
        <name>Ca(2+)</name>
        <dbReference type="ChEBI" id="CHEBI:29108"/>
        <label>1</label>
    </ligand>
</feature>
<feature type="binding site" evidence="4">
    <location>
        <position position="556"/>
    </location>
    <ligand>
        <name>Ca(2+)</name>
        <dbReference type="ChEBI" id="CHEBI:29108"/>
        <label>2</label>
    </ligand>
</feature>
<feature type="binding site" evidence="4">
    <location>
        <position position="558"/>
    </location>
    <ligand>
        <name>Ca(2+)</name>
        <dbReference type="ChEBI" id="CHEBI:29108"/>
        <label>2</label>
    </ligand>
</feature>
<feature type="binding site" evidence="4">
    <location>
        <position position="560"/>
    </location>
    <ligand>
        <name>Ca(2+)</name>
        <dbReference type="ChEBI" id="CHEBI:29108"/>
        <label>2</label>
    </ligand>
</feature>
<feature type="binding site" evidence="4">
    <location>
        <position position="562"/>
    </location>
    <ligand>
        <name>Ca(2+)</name>
        <dbReference type="ChEBI" id="CHEBI:29108"/>
        <label>2</label>
    </ligand>
</feature>
<feature type="binding site" evidence="4">
    <location>
        <position position="567"/>
    </location>
    <ligand>
        <name>Ca(2+)</name>
        <dbReference type="ChEBI" id="CHEBI:29108"/>
        <label>2</label>
    </ligand>
</feature>
<feature type="glycosylation site" description="N-linked (GlcNAc...) asparagine" evidence="2">
    <location>
        <position position="71"/>
    </location>
</feature>
<feature type="glycosylation site" description="N-linked (GlcNAc...) asparagine" evidence="2">
    <location>
        <position position="183"/>
    </location>
</feature>
<feature type="glycosylation site" description="N-linked (GlcNAc...) asparagine" evidence="2">
    <location>
        <position position="295"/>
    </location>
</feature>
<name>FKB10_BOVIN</name>